<sequence>NYGESGIVYPDGRLVQFTRAEADNIAEIGEAGVVMHDGTHVQFDRDMAAHHAGTPPQPMPVREMLAQPYGYSGIMKPDGNNRQFTAAESDNLVLVGPSGAVTADGKNVQFTDAGLPT</sequence>
<protein>
    <recommendedName>
        <fullName>Cuticle protein CP1243</fullName>
        <shortName>CPCP1243</shortName>
    </recommendedName>
</protein>
<evidence type="ECO:0000269" key="1">
    <source>
    </source>
</evidence>
<dbReference type="GO" id="GO:0042302">
    <property type="term" value="F:structural constituent of cuticle"/>
    <property type="evidence" value="ECO:0007669"/>
    <property type="project" value="UniProtKB-KW"/>
</dbReference>
<dbReference type="InterPro" id="IPR012539">
    <property type="entry name" value="Cuticle_1"/>
</dbReference>
<dbReference type="Pfam" id="PF08140">
    <property type="entry name" value="Cuticle_1"/>
    <property type="match status" value="2"/>
</dbReference>
<keyword id="KW-0193">Cuticle</keyword>
<keyword id="KW-0903">Direct protein sequencing</keyword>
<keyword id="KW-0677">Repeat</keyword>
<comment type="tissue specificity">
    <text>Calcified shell.</text>
</comment>
<comment type="mass spectrometry"/>
<name>CUPC2_CANPG</name>
<proteinExistence type="evidence at protein level"/>
<reference key="1">
    <citation type="journal article" date="1999" name="Comp. Biochem. Physiol.">
        <title>Exoskeletal proteins from the crab, Cancer pagurus.</title>
        <authorList>
            <person name="Andersen S.O."/>
        </authorList>
    </citation>
    <scope>PROTEIN SEQUENCE</scope>
    <scope>MASS SPECTROMETRY</scope>
    <source>
        <tissue>Carapace cuticle</tissue>
    </source>
</reference>
<feature type="chain" id="PRO_0000196162" description="Cuticle protein CP1243">
    <location>
        <begin position="1"/>
        <end position="117"/>
    </location>
</feature>
<feature type="repeat" description="1">
    <location>
        <begin position="1"/>
        <end position="17"/>
    </location>
</feature>
<feature type="repeat" description="2">
    <location>
        <begin position="26"/>
        <end position="43"/>
    </location>
</feature>
<feature type="repeat" description="3">
    <location>
        <begin position="67"/>
        <end position="84"/>
    </location>
</feature>
<feature type="repeat" description="4">
    <location>
        <begin position="93"/>
        <end position="110"/>
    </location>
</feature>
<organism>
    <name type="scientific">Cancer pagurus</name>
    <name type="common">Rock crab</name>
    <dbReference type="NCBI Taxonomy" id="6755"/>
    <lineage>
        <taxon>Eukaryota</taxon>
        <taxon>Metazoa</taxon>
        <taxon>Ecdysozoa</taxon>
        <taxon>Arthropoda</taxon>
        <taxon>Crustacea</taxon>
        <taxon>Multicrustacea</taxon>
        <taxon>Malacostraca</taxon>
        <taxon>Eumalacostraca</taxon>
        <taxon>Eucarida</taxon>
        <taxon>Decapoda</taxon>
        <taxon>Pleocyemata</taxon>
        <taxon>Brachyura</taxon>
        <taxon>Eubrachyura</taxon>
        <taxon>Cancroidea</taxon>
        <taxon>Cancridae</taxon>
        <taxon>Cancer</taxon>
    </lineage>
</organism>
<accession>P81581</accession>